<gene>
    <name evidence="1" type="primary">nusG</name>
    <name type="ordered locus">SAV0535</name>
</gene>
<sequence length="182" mass="20664">MSEEVGAKRWYAVHTYSGYENKVKKNLEKRVESMNMTEQIFRVVIPEEEETQVKDGKAKTTVKKTFPGYVLVELIMTDESWYVVRNTPGVTGFVGSAGAGSKPNPLLPEEVRFILKQMGLKEKTIDVELEVGEQVRIKSGPFANQVGEVQEIETDKFKLTVLVDMFGRETPVEVEFDQIEKL</sequence>
<comment type="function">
    <text evidence="1">Participates in transcription elongation, termination and antitermination.</text>
</comment>
<comment type="similarity">
    <text evidence="1">Belongs to the NusG family.</text>
</comment>
<evidence type="ECO:0000255" key="1">
    <source>
        <dbReference type="HAMAP-Rule" id="MF_00948"/>
    </source>
</evidence>
<accession>P0A095</accession>
<accession>O08386</accession>
<name>NUSG_STAAM</name>
<dbReference type="EMBL" id="BA000017">
    <property type="protein sequence ID" value="BAB56697.1"/>
    <property type="molecule type" value="Genomic_DNA"/>
</dbReference>
<dbReference type="RefSeq" id="WP_001288302.1">
    <property type="nucleotide sequence ID" value="NC_002758.2"/>
</dbReference>
<dbReference type="SMR" id="P0A095"/>
<dbReference type="KEGG" id="sav:SAV0535"/>
<dbReference type="HOGENOM" id="CLU_067287_1_1_9"/>
<dbReference type="PhylomeDB" id="P0A095"/>
<dbReference type="Proteomes" id="UP000002481">
    <property type="component" value="Chromosome"/>
</dbReference>
<dbReference type="GO" id="GO:0005829">
    <property type="term" value="C:cytosol"/>
    <property type="evidence" value="ECO:0007669"/>
    <property type="project" value="TreeGrafter"/>
</dbReference>
<dbReference type="GO" id="GO:0006353">
    <property type="term" value="P:DNA-templated transcription termination"/>
    <property type="evidence" value="ECO:0007669"/>
    <property type="project" value="UniProtKB-UniRule"/>
</dbReference>
<dbReference type="GO" id="GO:0032784">
    <property type="term" value="P:regulation of DNA-templated transcription elongation"/>
    <property type="evidence" value="ECO:0007669"/>
    <property type="project" value="InterPro"/>
</dbReference>
<dbReference type="GO" id="GO:0031564">
    <property type="term" value="P:transcription antitermination"/>
    <property type="evidence" value="ECO:0007669"/>
    <property type="project" value="UniProtKB-UniRule"/>
</dbReference>
<dbReference type="GO" id="GO:0140673">
    <property type="term" value="P:transcription elongation-coupled chromatin remodeling"/>
    <property type="evidence" value="ECO:0007669"/>
    <property type="project" value="InterPro"/>
</dbReference>
<dbReference type="CDD" id="cd06091">
    <property type="entry name" value="KOW_NusG"/>
    <property type="match status" value="1"/>
</dbReference>
<dbReference type="CDD" id="cd09891">
    <property type="entry name" value="NGN_Bact_1"/>
    <property type="match status" value="1"/>
</dbReference>
<dbReference type="FunFam" id="2.30.30.30:FF:000002">
    <property type="entry name" value="Transcription termination/antitermination factor NusG"/>
    <property type="match status" value="1"/>
</dbReference>
<dbReference type="FunFam" id="3.30.70.940:FF:000002">
    <property type="entry name" value="Transcription termination/antitermination protein NusG"/>
    <property type="match status" value="1"/>
</dbReference>
<dbReference type="Gene3D" id="2.30.30.30">
    <property type="match status" value="1"/>
</dbReference>
<dbReference type="Gene3D" id="3.30.70.940">
    <property type="entry name" value="NusG, N-terminal domain"/>
    <property type="match status" value="1"/>
</dbReference>
<dbReference type="HAMAP" id="MF_00948">
    <property type="entry name" value="NusG"/>
    <property type="match status" value="1"/>
</dbReference>
<dbReference type="InterPro" id="IPR005824">
    <property type="entry name" value="KOW"/>
</dbReference>
<dbReference type="InterPro" id="IPR047050">
    <property type="entry name" value="NGN"/>
</dbReference>
<dbReference type="InterPro" id="IPR006645">
    <property type="entry name" value="NGN-like_dom"/>
</dbReference>
<dbReference type="InterPro" id="IPR036735">
    <property type="entry name" value="NGN_dom_sf"/>
</dbReference>
<dbReference type="InterPro" id="IPR043425">
    <property type="entry name" value="NusG-like"/>
</dbReference>
<dbReference type="InterPro" id="IPR014722">
    <property type="entry name" value="Rib_uL2_dom2"/>
</dbReference>
<dbReference type="InterPro" id="IPR001062">
    <property type="entry name" value="Transcrpt_antiterm_NusG"/>
</dbReference>
<dbReference type="InterPro" id="IPR015869">
    <property type="entry name" value="Transcrpt_antiterm_NusG_bac_CS"/>
</dbReference>
<dbReference type="InterPro" id="IPR008991">
    <property type="entry name" value="Translation_prot_SH3-like_sf"/>
</dbReference>
<dbReference type="NCBIfam" id="TIGR00922">
    <property type="entry name" value="nusG"/>
    <property type="match status" value="1"/>
</dbReference>
<dbReference type="PANTHER" id="PTHR30265">
    <property type="entry name" value="RHO-INTERACTING TRANSCRIPTION TERMINATION FACTOR NUSG"/>
    <property type="match status" value="1"/>
</dbReference>
<dbReference type="PANTHER" id="PTHR30265:SF2">
    <property type="entry name" value="TRANSCRIPTION TERMINATION_ANTITERMINATION PROTEIN NUSG"/>
    <property type="match status" value="1"/>
</dbReference>
<dbReference type="Pfam" id="PF00467">
    <property type="entry name" value="KOW"/>
    <property type="match status" value="1"/>
</dbReference>
<dbReference type="Pfam" id="PF02357">
    <property type="entry name" value="NusG"/>
    <property type="match status" value="1"/>
</dbReference>
<dbReference type="PRINTS" id="PR00338">
    <property type="entry name" value="NUSGTNSCPFCT"/>
</dbReference>
<dbReference type="SMART" id="SM00739">
    <property type="entry name" value="KOW"/>
    <property type="match status" value="1"/>
</dbReference>
<dbReference type="SMART" id="SM00738">
    <property type="entry name" value="NGN"/>
    <property type="match status" value="1"/>
</dbReference>
<dbReference type="SUPFAM" id="SSF82679">
    <property type="entry name" value="N-utilization substance G protein NusG, N-terminal domain"/>
    <property type="match status" value="1"/>
</dbReference>
<dbReference type="SUPFAM" id="SSF50104">
    <property type="entry name" value="Translation proteins SH3-like domain"/>
    <property type="match status" value="1"/>
</dbReference>
<dbReference type="PROSITE" id="PS01014">
    <property type="entry name" value="NUSG"/>
    <property type="match status" value="1"/>
</dbReference>
<reference key="1">
    <citation type="journal article" date="2001" name="Lancet">
        <title>Whole genome sequencing of meticillin-resistant Staphylococcus aureus.</title>
        <authorList>
            <person name="Kuroda M."/>
            <person name="Ohta T."/>
            <person name="Uchiyama I."/>
            <person name="Baba T."/>
            <person name="Yuzawa H."/>
            <person name="Kobayashi I."/>
            <person name="Cui L."/>
            <person name="Oguchi A."/>
            <person name="Aoki K."/>
            <person name="Nagai Y."/>
            <person name="Lian J.-Q."/>
            <person name="Ito T."/>
            <person name="Kanamori M."/>
            <person name="Matsumaru H."/>
            <person name="Maruyama A."/>
            <person name="Murakami H."/>
            <person name="Hosoyama A."/>
            <person name="Mizutani-Ui Y."/>
            <person name="Takahashi N.K."/>
            <person name="Sawano T."/>
            <person name="Inoue R."/>
            <person name="Kaito C."/>
            <person name="Sekimizu K."/>
            <person name="Hirakawa H."/>
            <person name="Kuhara S."/>
            <person name="Goto S."/>
            <person name="Yabuzaki J."/>
            <person name="Kanehisa M."/>
            <person name="Yamashita A."/>
            <person name="Oshima K."/>
            <person name="Furuya K."/>
            <person name="Yoshino C."/>
            <person name="Shiba T."/>
            <person name="Hattori M."/>
            <person name="Ogasawara N."/>
            <person name="Hayashi H."/>
            <person name="Hiramatsu K."/>
        </authorList>
    </citation>
    <scope>NUCLEOTIDE SEQUENCE [LARGE SCALE GENOMIC DNA]</scope>
    <source>
        <strain>Mu50 / ATCC 700699</strain>
    </source>
</reference>
<proteinExistence type="inferred from homology"/>
<protein>
    <recommendedName>
        <fullName evidence="1">Transcription termination/antitermination protein NusG</fullName>
    </recommendedName>
</protein>
<organism>
    <name type="scientific">Staphylococcus aureus (strain Mu50 / ATCC 700699)</name>
    <dbReference type="NCBI Taxonomy" id="158878"/>
    <lineage>
        <taxon>Bacteria</taxon>
        <taxon>Bacillati</taxon>
        <taxon>Bacillota</taxon>
        <taxon>Bacilli</taxon>
        <taxon>Bacillales</taxon>
        <taxon>Staphylococcaceae</taxon>
        <taxon>Staphylococcus</taxon>
    </lineage>
</organism>
<feature type="chain" id="PRO_0000113948" description="Transcription termination/antitermination protein NusG">
    <location>
        <begin position="1"/>
        <end position="182"/>
    </location>
</feature>
<feature type="domain" description="KOW" evidence="1">
    <location>
        <begin position="131"/>
        <end position="163"/>
    </location>
</feature>
<keyword id="KW-0804">Transcription</keyword>
<keyword id="KW-0889">Transcription antitermination</keyword>
<keyword id="KW-0805">Transcription regulation</keyword>
<keyword id="KW-0806">Transcription termination</keyword>